<name>NREC_STAHJ</name>
<feature type="chain" id="PRO_0000349359" description="Oxygen regulatory protein NreC">
    <location>
        <begin position="1"/>
        <end position="217"/>
    </location>
</feature>
<feature type="domain" description="Response regulatory" evidence="2">
    <location>
        <begin position="2"/>
        <end position="119"/>
    </location>
</feature>
<feature type="domain" description="HTH luxR-type" evidence="3">
    <location>
        <begin position="148"/>
        <end position="213"/>
    </location>
</feature>
<feature type="DNA-binding region" description="H-T-H motif" evidence="3">
    <location>
        <begin position="172"/>
        <end position="191"/>
    </location>
</feature>
<feature type="modified residue" description="4-aspartylphosphate" evidence="2">
    <location>
        <position position="53"/>
    </location>
</feature>
<sequence length="217" mass="24462">MKIVIADDHAVVRTGFSMILNFQEDMEVVATAADGGEAYQKVMEHKPDVLIMDLSMPPGESGLIATSKISESFPETKILILTMYDDEEYLFHVLRNGAKGYILKNAPDEQLLLAVRTVYKGETYVDMKLTTSLVNEFVNHKHSDDVSTNDPFKILSKRELEILPLIAKGYGNKDIAEKLFVSVKTVEAHKTHIMTKLDLKSKPELVEYALKKKLLDF</sequence>
<keyword id="KW-0010">Activator</keyword>
<keyword id="KW-0963">Cytoplasm</keyword>
<keyword id="KW-0238">DNA-binding</keyword>
<keyword id="KW-0597">Phosphoprotein</keyword>
<keyword id="KW-0804">Transcription</keyword>
<keyword id="KW-0805">Transcription regulation</keyword>
<keyword id="KW-0902">Two-component regulatory system</keyword>
<gene>
    <name type="primary">nreC</name>
    <name type="ordered locus">SH0660</name>
</gene>
<dbReference type="EMBL" id="AP006716">
    <property type="protein sequence ID" value="BAE03969.1"/>
    <property type="molecule type" value="Genomic_DNA"/>
</dbReference>
<dbReference type="RefSeq" id="WP_011274985.1">
    <property type="nucleotide sequence ID" value="NC_007168.1"/>
</dbReference>
<dbReference type="SMR" id="Q4L8Q6"/>
<dbReference type="GeneID" id="93780055"/>
<dbReference type="KEGG" id="sha:SH0660"/>
<dbReference type="eggNOG" id="COG2197">
    <property type="taxonomic scope" value="Bacteria"/>
</dbReference>
<dbReference type="HOGENOM" id="CLU_000445_90_1_9"/>
<dbReference type="OrthoDB" id="9780153at2"/>
<dbReference type="Proteomes" id="UP000000543">
    <property type="component" value="Chromosome"/>
</dbReference>
<dbReference type="GO" id="GO:0005737">
    <property type="term" value="C:cytoplasm"/>
    <property type="evidence" value="ECO:0007669"/>
    <property type="project" value="UniProtKB-SubCell"/>
</dbReference>
<dbReference type="GO" id="GO:0003677">
    <property type="term" value="F:DNA binding"/>
    <property type="evidence" value="ECO:0007669"/>
    <property type="project" value="UniProtKB-KW"/>
</dbReference>
<dbReference type="GO" id="GO:0000160">
    <property type="term" value="P:phosphorelay signal transduction system"/>
    <property type="evidence" value="ECO:0007669"/>
    <property type="project" value="UniProtKB-KW"/>
</dbReference>
<dbReference type="GO" id="GO:0006355">
    <property type="term" value="P:regulation of DNA-templated transcription"/>
    <property type="evidence" value="ECO:0007669"/>
    <property type="project" value="InterPro"/>
</dbReference>
<dbReference type="CDD" id="cd06170">
    <property type="entry name" value="LuxR_C_like"/>
    <property type="match status" value="1"/>
</dbReference>
<dbReference type="CDD" id="cd17535">
    <property type="entry name" value="REC_NarL-like"/>
    <property type="match status" value="1"/>
</dbReference>
<dbReference type="Gene3D" id="3.40.50.2300">
    <property type="match status" value="1"/>
</dbReference>
<dbReference type="InterPro" id="IPR011006">
    <property type="entry name" value="CheY-like_superfamily"/>
</dbReference>
<dbReference type="InterPro" id="IPR016032">
    <property type="entry name" value="Sig_transdc_resp-reg_C-effctor"/>
</dbReference>
<dbReference type="InterPro" id="IPR001789">
    <property type="entry name" value="Sig_transdc_resp-reg_receiver"/>
</dbReference>
<dbReference type="InterPro" id="IPR000792">
    <property type="entry name" value="Tscrpt_reg_LuxR_C"/>
</dbReference>
<dbReference type="InterPro" id="IPR039420">
    <property type="entry name" value="WalR-like"/>
</dbReference>
<dbReference type="PANTHER" id="PTHR43214:SF37">
    <property type="entry name" value="TRANSCRIPTIONAL REGULATORY PROTEIN YDFI"/>
    <property type="match status" value="1"/>
</dbReference>
<dbReference type="PANTHER" id="PTHR43214">
    <property type="entry name" value="TWO-COMPONENT RESPONSE REGULATOR"/>
    <property type="match status" value="1"/>
</dbReference>
<dbReference type="Pfam" id="PF00196">
    <property type="entry name" value="GerE"/>
    <property type="match status" value="1"/>
</dbReference>
<dbReference type="Pfam" id="PF00072">
    <property type="entry name" value="Response_reg"/>
    <property type="match status" value="1"/>
</dbReference>
<dbReference type="PRINTS" id="PR00038">
    <property type="entry name" value="HTHLUXR"/>
</dbReference>
<dbReference type="SMART" id="SM00421">
    <property type="entry name" value="HTH_LUXR"/>
    <property type="match status" value="1"/>
</dbReference>
<dbReference type="SMART" id="SM00448">
    <property type="entry name" value="REC"/>
    <property type="match status" value="1"/>
</dbReference>
<dbReference type="SUPFAM" id="SSF46894">
    <property type="entry name" value="C-terminal effector domain of the bipartite response regulators"/>
    <property type="match status" value="1"/>
</dbReference>
<dbReference type="SUPFAM" id="SSF52172">
    <property type="entry name" value="CheY-like"/>
    <property type="match status" value="1"/>
</dbReference>
<dbReference type="PROSITE" id="PS00622">
    <property type="entry name" value="HTH_LUXR_1"/>
    <property type="match status" value="1"/>
</dbReference>
<dbReference type="PROSITE" id="PS50043">
    <property type="entry name" value="HTH_LUXR_2"/>
    <property type="match status" value="1"/>
</dbReference>
<dbReference type="PROSITE" id="PS50110">
    <property type="entry name" value="RESPONSE_REGULATORY"/>
    <property type="match status" value="1"/>
</dbReference>
<organism>
    <name type="scientific">Staphylococcus haemolyticus (strain JCSC1435)</name>
    <dbReference type="NCBI Taxonomy" id="279808"/>
    <lineage>
        <taxon>Bacteria</taxon>
        <taxon>Bacillati</taxon>
        <taxon>Bacillota</taxon>
        <taxon>Bacilli</taxon>
        <taxon>Bacillales</taxon>
        <taxon>Staphylococcaceae</taxon>
        <taxon>Staphylococcus</taxon>
    </lineage>
</organism>
<proteinExistence type="inferred from homology"/>
<protein>
    <recommendedName>
        <fullName>Oxygen regulatory protein NreC</fullName>
    </recommendedName>
    <alternativeName>
        <fullName>Nitrogen regulation protein C</fullName>
    </alternativeName>
</protein>
<evidence type="ECO:0000250" key="1"/>
<evidence type="ECO:0000255" key="2">
    <source>
        <dbReference type="PROSITE-ProRule" id="PRU00169"/>
    </source>
</evidence>
<evidence type="ECO:0000255" key="3">
    <source>
        <dbReference type="PROSITE-ProRule" id="PRU00411"/>
    </source>
</evidence>
<evidence type="ECO:0000305" key="4"/>
<reference key="1">
    <citation type="journal article" date="2005" name="J. Bacteriol.">
        <title>Whole-genome sequencing of Staphylococcus haemolyticus uncovers the extreme plasticity of its genome and the evolution of human-colonizing staphylococcal species.</title>
        <authorList>
            <person name="Takeuchi F."/>
            <person name="Watanabe S."/>
            <person name="Baba T."/>
            <person name="Yuzawa H."/>
            <person name="Ito T."/>
            <person name="Morimoto Y."/>
            <person name="Kuroda M."/>
            <person name="Cui L."/>
            <person name="Takahashi M."/>
            <person name="Ankai A."/>
            <person name="Baba S."/>
            <person name="Fukui S."/>
            <person name="Lee J.C."/>
            <person name="Hiramatsu K."/>
        </authorList>
    </citation>
    <scope>NUCLEOTIDE SEQUENCE [LARGE SCALE GENOMIC DNA]</scope>
    <source>
        <strain>JCSC1435</strain>
    </source>
</reference>
<accession>Q4L8Q6</accession>
<comment type="function">
    <text evidence="1">Member of the two-component regulatory system NreB/NreC involved in the control of dissimilatory nitrate/nitrite reduction in response to oxygen. Phosphorylated NreC binds to a GC-rich palindromic sequence at the promoters of the nitrate (narGHJI) and nitrite (nir) reductase operons, as well as the putative nitrate transporter gene narT, and activates their expression (By similarity).</text>
</comment>
<comment type="subcellular location">
    <subcellularLocation>
        <location evidence="4">Cytoplasm</location>
    </subcellularLocation>
</comment>
<comment type="PTM">
    <text evidence="1">Phosphorylated by NreB.</text>
</comment>